<name>AATC_CAEEL</name>
<feature type="chain" id="PRO_0000123876" description="Aspartate aminotransferase, cytoplasmic">
    <location>
        <begin position="1"/>
        <end position="408"/>
    </location>
</feature>
<feature type="binding site" evidence="1">
    <location>
        <position position="36"/>
    </location>
    <ligand>
        <name>L-aspartate</name>
        <dbReference type="ChEBI" id="CHEBI:29991"/>
    </ligand>
</feature>
<feature type="binding site" evidence="1">
    <location>
        <position position="133"/>
    </location>
    <ligand>
        <name>L-aspartate</name>
        <dbReference type="ChEBI" id="CHEBI:29991"/>
    </ligand>
</feature>
<feature type="binding site" evidence="1">
    <location>
        <position position="187"/>
    </location>
    <ligand>
        <name>L-aspartate</name>
        <dbReference type="ChEBI" id="CHEBI:29991"/>
    </ligand>
</feature>
<feature type="binding site" evidence="1">
    <location>
        <position position="379"/>
    </location>
    <ligand>
        <name>L-aspartate</name>
        <dbReference type="ChEBI" id="CHEBI:29991"/>
    </ligand>
</feature>
<feature type="modified residue" description="N6-(pyridoxal phosphate)lysine" evidence="1">
    <location>
        <position position="251"/>
    </location>
</feature>
<feature type="mutagenesis site" description="In hp731; decreases glutamate levels. Rescues the defective backwards locomotion or 'reversals' movements phenotype and decreases the increased glutamate levels in ubr-1 mutants." evidence="2">
    <original>C</original>
    <variation>Y</variation>
    <location>
        <position position="184"/>
    </location>
</feature>
<sequence>MSFFDGIPVAPPIEVFHKNKMYLDETAPVKVNLTIGAYRTEEGQPWVLPVVHETEVEIANDTSLNHEYLPVLGHEGFRKAATELVLGAESPAIKEERSFGVQCLSGTGALRAGAEFLASVCNMKTVYVSNPTWGNHKLVFKKAGFTTVADYTFWDYDNKRVHIEKFLSDLESAPEKSVIILHGCAHNPTGMDPTQEQWKLVAEVIKRKNLFTFFDIAYQGFASGDPAADAWAIRYFVDQGMEMVVSQSFAKNFGLYNERVGNLTVVVNNPAVIAGFQSQMSLVIRANWSNPPAHGARIVHKVLTTPARREQWNQSIQAMSSRIKQMRAALLRHLMDLGTPGTWDHIIQQIGMFSYTGLTSAQVDHLIANHKVFLLRDGRINICGLNTKNVEYVAKAIDETVRAVKSNI</sequence>
<reference key="1">
    <citation type="journal article" date="1998" name="Science">
        <title>Genome sequence of the nematode C. elegans: a platform for investigating biology.</title>
        <authorList>
            <consortium name="The C. elegans sequencing consortium"/>
        </authorList>
    </citation>
    <scope>NUCLEOTIDE SEQUENCE [LARGE SCALE GENOMIC DNA]</scope>
    <source>
        <strain>Bristol N2</strain>
    </source>
</reference>
<reference key="2">
    <citation type="journal article" date="2018" name="PLoS Genet.">
        <title>The UBR-1 ubiquitin ligase regulates glutamate metabolism to generate coordinated motor pattern in Caenorhabditis elegans.</title>
        <authorList>
            <person name="Chitturi J."/>
            <person name="Hung W."/>
            <person name="Rahman A.M.A."/>
            <person name="Wu M."/>
            <person name="Lim M.A."/>
            <person name="Calarco J."/>
            <person name="Baran R."/>
            <person name="Huang X."/>
            <person name="Dennis J.W."/>
            <person name="Zhen M."/>
        </authorList>
    </citation>
    <scope>FUNCTION</scope>
    <scope>CATALYTIC ACTIVITY</scope>
    <scope>SUBCELLULAR LOCATION</scope>
    <scope>TISSUE SPECIFICITY</scope>
    <scope>MUTAGENESIS OF CYS-184</scope>
</reference>
<gene>
    <name evidence="5" type="primary">got-1.2</name>
    <name evidence="3" type="synonym">got-1</name>
    <name evidence="5" type="ORF">T01C8.5</name>
</gene>
<keyword id="KW-0032">Aminotransferase</keyword>
<keyword id="KW-0963">Cytoplasm</keyword>
<keyword id="KW-0663">Pyridoxal phosphate</keyword>
<keyword id="KW-1185">Reference proteome</keyword>
<keyword id="KW-0808">Transferase</keyword>
<protein>
    <recommendedName>
        <fullName evidence="4">Aspartate aminotransferase, cytoplasmic</fullName>
        <ecNumber evidence="2">2.6.1.1</ecNumber>
    </recommendedName>
    <alternativeName>
        <fullName>Glutamate oxaloacetate transaminase 1.2</fullName>
    </alternativeName>
    <alternativeName>
        <fullName>Transaminase A</fullName>
    </alternativeName>
</protein>
<comment type="function">
    <text evidence="2">Biosynthesis of L-glutamate from L-aspartate (PubMed:29649217). Important regulator of levels of glutamate, the major excitatory neurotransmitter of the central nervous system (PubMed:29649217).</text>
</comment>
<comment type="catalytic activity">
    <reaction evidence="2">
        <text>L-aspartate + 2-oxoglutarate = oxaloacetate + L-glutamate</text>
        <dbReference type="Rhea" id="RHEA:21824"/>
        <dbReference type="ChEBI" id="CHEBI:16452"/>
        <dbReference type="ChEBI" id="CHEBI:16810"/>
        <dbReference type="ChEBI" id="CHEBI:29985"/>
        <dbReference type="ChEBI" id="CHEBI:29991"/>
        <dbReference type="EC" id="2.6.1.1"/>
    </reaction>
</comment>
<comment type="cofactor">
    <cofactor evidence="1">
        <name>pyridoxal 5'-phosphate</name>
        <dbReference type="ChEBI" id="CHEBI:597326"/>
    </cofactor>
</comment>
<comment type="subunit">
    <text evidence="1">Homodimer.</text>
</comment>
<comment type="subcellular location">
    <subcellularLocation>
        <location evidence="2">Cytoplasm</location>
    </subcellularLocation>
</comment>
<comment type="tissue specificity">
    <text evidence="2">Expressed in all somatic tissues including the nervous system.</text>
</comment>
<comment type="miscellaneous">
    <text>In eukaryotes there are cytoplasmic, mitochondrial and chloroplastic isozymes.</text>
</comment>
<comment type="similarity">
    <text evidence="4">Belongs to the class-I pyridoxal-phosphate-dependent aminotransferase family.</text>
</comment>
<accession>Q22067</accession>
<evidence type="ECO:0000250" key="1"/>
<evidence type="ECO:0000269" key="2">
    <source>
    </source>
</evidence>
<evidence type="ECO:0000303" key="3">
    <source>
    </source>
</evidence>
<evidence type="ECO:0000305" key="4"/>
<evidence type="ECO:0000312" key="5">
    <source>
        <dbReference type="WormBase" id="T01C8.5"/>
    </source>
</evidence>
<dbReference type="EC" id="2.6.1.1" evidence="2"/>
<dbReference type="EMBL" id="BX284606">
    <property type="protein sequence ID" value="CCD68837.1"/>
    <property type="molecule type" value="Genomic_DNA"/>
</dbReference>
<dbReference type="PIR" id="T29857">
    <property type="entry name" value="T29857"/>
</dbReference>
<dbReference type="RefSeq" id="NP_510709.1">
    <property type="nucleotide sequence ID" value="NM_078308.8"/>
</dbReference>
<dbReference type="SMR" id="Q22067"/>
<dbReference type="BioGRID" id="46609">
    <property type="interactions" value="14"/>
</dbReference>
<dbReference type="FunCoup" id="Q22067">
    <property type="interactions" value="1231"/>
</dbReference>
<dbReference type="STRING" id="6239.T01C8.5.1"/>
<dbReference type="PaxDb" id="6239-T01C8.5.1"/>
<dbReference type="PeptideAtlas" id="Q22067"/>
<dbReference type="EnsemblMetazoa" id="T01C8.5.1">
    <property type="protein sequence ID" value="T01C8.5.1"/>
    <property type="gene ID" value="WBGene00020146"/>
</dbReference>
<dbReference type="GeneID" id="181726"/>
<dbReference type="KEGG" id="cel:CELE_T01C8.5"/>
<dbReference type="UCSC" id="T01C8.5">
    <property type="organism name" value="c. elegans"/>
</dbReference>
<dbReference type="AGR" id="WB:WBGene00020146"/>
<dbReference type="CTD" id="181726"/>
<dbReference type="WormBase" id="T01C8.5">
    <property type="protein sequence ID" value="CE07462"/>
    <property type="gene ID" value="WBGene00020146"/>
    <property type="gene designation" value="got-1.2"/>
</dbReference>
<dbReference type="eggNOG" id="KOG1412">
    <property type="taxonomic scope" value="Eukaryota"/>
</dbReference>
<dbReference type="GeneTree" id="ENSGT00950000183082"/>
<dbReference type="HOGENOM" id="CLU_032440_1_2_1"/>
<dbReference type="InParanoid" id="Q22067"/>
<dbReference type="OMA" id="GTWTHIT"/>
<dbReference type="OrthoDB" id="6752799at2759"/>
<dbReference type="PhylomeDB" id="Q22067"/>
<dbReference type="Reactome" id="R-CEL-8963693">
    <property type="pathway name" value="Aspartate and asparagine metabolism"/>
</dbReference>
<dbReference type="Reactome" id="R-CEL-9856872">
    <property type="pathway name" value="Malate-aspartate shuttle"/>
</dbReference>
<dbReference type="PRO" id="PR:Q22067"/>
<dbReference type="Proteomes" id="UP000001940">
    <property type="component" value="Chromosome X"/>
</dbReference>
<dbReference type="Bgee" id="WBGene00020146">
    <property type="expression patterns" value="Expressed in larva and 3 other cell types or tissues"/>
</dbReference>
<dbReference type="GO" id="GO:0005737">
    <property type="term" value="C:cytoplasm"/>
    <property type="evidence" value="ECO:0000314"/>
    <property type="project" value="UniProtKB"/>
</dbReference>
<dbReference type="GO" id="GO:0005829">
    <property type="term" value="C:cytosol"/>
    <property type="evidence" value="ECO:0000318"/>
    <property type="project" value="GO_Central"/>
</dbReference>
<dbReference type="GO" id="GO:0004069">
    <property type="term" value="F:L-aspartate:2-oxoglutarate aminotransferase activity"/>
    <property type="evidence" value="ECO:0000314"/>
    <property type="project" value="UniProtKB"/>
</dbReference>
<dbReference type="GO" id="GO:0030170">
    <property type="term" value="F:pyridoxal phosphate binding"/>
    <property type="evidence" value="ECO:0007669"/>
    <property type="project" value="InterPro"/>
</dbReference>
<dbReference type="GO" id="GO:0006103">
    <property type="term" value="P:2-oxoglutarate metabolic process"/>
    <property type="evidence" value="ECO:0000250"/>
    <property type="project" value="UniProtKB"/>
</dbReference>
<dbReference type="GO" id="GO:0006532">
    <property type="term" value="P:aspartate biosynthetic process"/>
    <property type="evidence" value="ECO:0000318"/>
    <property type="project" value="GO_Central"/>
</dbReference>
<dbReference type="GO" id="GO:0006531">
    <property type="term" value="P:aspartate metabolic process"/>
    <property type="evidence" value="ECO:0000250"/>
    <property type="project" value="UniProtKB"/>
</dbReference>
<dbReference type="GO" id="GO:0006536">
    <property type="term" value="P:glutamate metabolic process"/>
    <property type="evidence" value="ECO:0000250"/>
    <property type="project" value="UniProtKB"/>
</dbReference>
<dbReference type="GO" id="GO:2000213">
    <property type="term" value="P:positive regulation of glutamate metabolic process"/>
    <property type="evidence" value="ECO:0000315"/>
    <property type="project" value="UniProtKB"/>
</dbReference>
<dbReference type="CDD" id="cd00609">
    <property type="entry name" value="AAT_like"/>
    <property type="match status" value="1"/>
</dbReference>
<dbReference type="FunFam" id="3.40.640.10:FF:000066">
    <property type="entry name" value="Aspartate aminotransferase"/>
    <property type="match status" value="1"/>
</dbReference>
<dbReference type="FunFam" id="3.90.1150.10:FF:000001">
    <property type="entry name" value="Aspartate aminotransferase"/>
    <property type="match status" value="1"/>
</dbReference>
<dbReference type="Gene3D" id="3.90.1150.10">
    <property type="entry name" value="Aspartate Aminotransferase, domain 1"/>
    <property type="match status" value="1"/>
</dbReference>
<dbReference type="Gene3D" id="3.40.640.10">
    <property type="entry name" value="Type I PLP-dependent aspartate aminotransferase-like (Major domain)"/>
    <property type="match status" value="1"/>
</dbReference>
<dbReference type="InterPro" id="IPR004839">
    <property type="entry name" value="Aminotransferase_I/II_large"/>
</dbReference>
<dbReference type="InterPro" id="IPR000796">
    <property type="entry name" value="Asp_trans"/>
</dbReference>
<dbReference type="InterPro" id="IPR004838">
    <property type="entry name" value="NHTrfase_class1_PyrdxlP-BS"/>
</dbReference>
<dbReference type="InterPro" id="IPR015424">
    <property type="entry name" value="PyrdxlP-dep_Trfase"/>
</dbReference>
<dbReference type="InterPro" id="IPR015421">
    <property type="entry name" value="PyrdxlP-dep_Trfase_major"/>
</dbReference>
<dbReference type="InterPro" id="IPR015422">
    <property type="entry name" value="PyrdxlP-dep_Trfase_small"/>
</dbReference>
<dbReference type="NCBIfam" id="NF006719">
    <property type="entry name" value="PRK09257.1"/>
    <property type="match status" value="1"/>
</dbReference>
<dbReference type="PANTHER" id="PTHR11879">
    <property type="entry name" value="ASPARTATE AMINOTRANSFERASE"/>
    <property type="match status" value="1"/>
</dbReference>
<dbReference type="PANTHER" id="PTHR11879:SF55">
    <property type="entry name" value="GLUTAMATE OXALOACETATE TRANSAMINASE 1, ISOFORM B"/>
    <property type="match status" value="1"/>
</dbReference>
<dbReference type="Pfam" id="PF00155">
    <property type="entry name" value="Aminotran_1_2"/>
    <property type="match status" value="1"/>
</dbReference>
<dbReference type="PRINTS" id="PR00799">
    <property type="entry name" value="TRANSAMINASE"/>
</dbReference>
<dbReference type="SUPFAM" id="SSF53383">
    <property type="entry name" value="PLP-dependent transferases"/>
    <property type="match status" value="1"/>
</dbReference>
<dbReference type="PROSITE" id="PS00105">
    <property type="entry name" value="AA_TRANSFER_CLASS_1"/>
    <property type="match status" value="1"/>
</dbReference>
<proteinExistence type="evidence at protein level"/>
<organism>
    <name type="scientific">Caenorhabditis elegans</name>
    <dbReference type="NCBI Taxonomy" id="6239"/>
    <lineage>
        <taxon>Eukaryota</taxon>
        <taxon>Metazoa</taxon>
        <taxon>Ecdysozoa</taxon>
        <taxon>Nematoda</taxon>
        <taxon>Chromadorea</taxon>
        <taxon>Rhabditida</taxon>
        <taxon>Rhabditina</taxon>
        <taxon>Rhabditomorpha</taxon>
        <taxon>Rhabditoidea</taxon>
        <taxon>Rhabditidae</taxon>
        <taxon>Peloderinae</taxon>
        <taxon>Caenorhabditis</taxon>
    </lineage>
</organism>